<evidence type="ECO:0000250" key="1"/>
<evidence type="ECO:0000250" key="2">
    <source>
        <dbReference type="UniProtKB" id="P70096"/>
    </source>
</evidence>
<evidence type="ECO:0000250" key="3">
    <source>
        <dbReference type="UniProtKB" id="Q99661"/>
    </source>
</evidence>
<evidence type="ECO:0000255" key="4"/>
<evidence type="ECO:0000255" key="5">
    <source>
        <dbReference type="PROSITE-ProRule" id="PRU00283"/>
    </source>
</evidence>
<evidence type="ECO:0000256" key="6">
    <source>
        <dbReference type="SAM" id="MobiDB-lite"/>
    </source>
</evidence>
<reference key="1">
    <citation type="journal article" date="2002" name="BMC Genomics">
        <title>Cynomolgus monkey testicular cDNAs for discovery of novel human genes in the human genome sequence.</title>
        <authorList>
            <person name="Osada N."/>
            <person name="Hida M."/>
            <person name="Kusuda J."/>
            <person name="Tanuma R."/>
            <person name="Hirata M."/>
            <person name="Suto Y."/>
            <person name="Hirai M."/>
            <person name="Terao K."/>
            <person name="Sugano S."/>
            <person name="Hashimoto K."/>
        </authorList>
    </citation>
    <scope>NUCLEOTIDE SEQUENCE [LARGE SCALE MRNA]</scope>
    <source>
        <tissue>Testis</tissue>
    </source>
</reference>
<feature type="chain" id="PRO_0000125419" description="Kinesin-like protein KIF2C">
    <location>
        <begin position="1"/>
        <end position="671"/>
    </location>
</feature>
<feature type="domain" description="Kinesin motor" evidence="5">
    <location>
        <begin position="204"/>
        <end position="534"/>
    </location>
</feature>
<feature type="region of interest" description="Globular" evidence="4">
    <location>
        <begin position="1"/>
        <end position="200"/>
    </location>
</feature>
<feature type="region of interest" description="Disordered" evidence="6">
    <location>
        <begin position="36"/>
        <end position="62"/>
    </location>
</feature>
<feature type="region of interest" description="Negative regulator of microtubule-binding" evidence="1">
    <location>
        <begin position="153"/>
        <end position="184"/>
    </location>
</feature>
<feature type="coiled-coil region" evidence="4">
    <location>
        <begin position="564"/>
        <end position="604"/>
    </location>
</feature>
<feature type="short sequence motif" description="Microtubule tip localization signal">
    <location>
        <begin position="44"/>
        <end position="47"/>
    </location>
</feature>
<feature type="binding site" evidence="5">
    <location>
        <begin position="294"/>
        <end position="301"/>
    </location>
    <ligand>
        <name>ATP</name>
        <dbReference type="ChEBI" id="CHEBI:30616"/>
    </ligand>
</feature>
<feature type="modified residue" description="Phosphoserine; by AURKB" evidence="3">
    <location>
        <position position="41"/>
    </location>
</feature>
<feature type="modified residue" description="Phosphoserine" evidence="3">
    <location>
        <position position="52"/>
    </location>
</feature>
<feature type="modified residue" description="Phosphoserine" evidence="2">
    <location>
        <position position="57"/>
    </location>
</feature>
<feature type="modified residue" description="Phosphoserine" evidence="2">
    <location>
        <position position="61"/>
    </location>
</feature>
<feature type="modified residue" description="Phosphoserine" evidence="3">
    <location>
        <position position="112"/>
    </location>
</feature>
<feature type="modified residue" description="Phosphoserine" evidence="3">
    <location>
        <position position="121"/>
    </location>
</feature>
<feature type="modified residue" description="Phosphoserine" evidence="3">
    <location>
        <position position="133"/>
    </location>
</feature>
<feature type="modified residue" description="Phosphoserine" evidence="2">
    <location>
        <position position="138"/>
    </location>
</feature>
<feature type="modified residue" description="Phosphoserine" evidence="3">
    <location>
        <position position="465"/>
    </location>
</feature>
<feature type="modified residue" description="Phosphoserine" evidence="3">
    <location>
        <position position="567"/>
    </location>
</feature>
<feature type="modified residue" description="Phosphoserine" evidence="3">
    <location>
        <position position="579"/>
    </location>
</feature>
<feature type="disulfide bond" evidence="1">
    <location>
        <begin position="191"/>
        <end position="233"/>
    </location>
</feature>
<feature type="disulfide bond" evidence="1">
    <location>
        <begin position="290"/>
        <end position="506"/>
    </location>
</feature>
<dbReference type="EMBL" id="AB072747">
    <property type="protein sequence ID" value="BAB69716.1"/>
    <property type="molecule type" value="mRNA"/>
</dbReference>
<dbReference type="RefSeq" id="XP_005543633.1">
    <property type="nucleotide sequence ID" value="XM_005543576.2"/>
</dbReference>
<dbReference type="SMR" id="Q95LP1"/>
<dbReference type="STRING" id="9541.ENSMFAP00000024552"/>
<dbReference type="Ensembl" id="ENSMFAT00000032667.2">
    <property type="protein sequence ID" value="ENSMFAP00000024527.1"/>
    <property type="gene ID" value="ENSMFAG00000043842.2"/>
</dbReference>
<dbReference type="VEuPathDB" id="HostDB:ENSMFAG00000043842"/>
<dbReference type="eggNOG" id="KOG0246">
    <property type="taxonomic scope" value="Eukaryota"/>
</dbReference>
<dbReference type="GeneTree" id="ENSGT00940000154046"/>
<dbReference type="Proteomes" id="UP000233100">
    <property type="component" value="Chromosome 1"/>
</dbReference>
<dbReference type="Bgee" id="ENSMFAG00000043842">
    <property type="expression patterns" value="Expressed in bone marrow and 4 other cell types or tissues"/>
</dbReference>
<dbReference type="GO" id="GO:0005737">
    <property type="term" value="C:cytoplasm"/>
    <property type="evidence" value="ECO:0007669"/>
    <property type="project" value="UniProtKB-KW"/>
</dbReference>
<dbReference type="GO" id="GO:0000776">
    <property type="term" value="C:kinetochore"/>
    <property type="evidence" value="ECO:0000250"/>
    <property type="project" value="UniProtKB"/>
</dbReference>
<dbReference type="GO" id="GO:0035371">
    <property type="term" value="C:microtubule plus-end"/>
    <property type="evidence" value="ECO:0000250"/>
    <property type="project" value="UniProtKB"/>
</dbReference>
<dbReference type="GO" id="GO:0005634">
    <property type="term" value="C:nucleus"/>
    <property type="evidence" value="ECO:0007669"/>
    <property type="project" value="UniProtKB-SubCell"/>
</dbReference>
<dbReference type="GO" id="GO:0005524">
    <property type="term" value="F:ATP binding"/>
    <property type="evidence" value="ECO:0007669"/>
    <property type="project" value="UniProtKB-KW"/>
</dbReference>
<dbReference type="GO" id="GO:0003777">
    <property type="term" value="F:microtubule motor activity"/>
    <property type="evidence" value="ECO:0007669"/>
    <property type="project" value="InterPro"/>
</dbReference>
<dbReference type="GO" id="GO:0051010">
    <property type="term" value="F:microtubule plus-end binding"/>
    <property type="evidence" value="ECO:0000250"/>
    <property type="project" value="UniProtKB"/>
</dbReference>
<dbReference type="GO" id="GO:0051315">
    <property type="term" value="P:attachment of mitotic spindle microtubules to kinetochore"/>
    <property type="evidence" value="ECO:0000250"/>
    <property type="project" value="UniProtKB"/>
</dbReference>
<dbReference type="GO" id="GO:0051301">
    <property type="term" value="P:cell division"/>
    <property type="evidence" value="ECO:0007669"/>
    <property type="project" value="UniProtKB-KW"/>
</dbReference>
<dbReference type="GO" id="GO:0051310">
    <property type="term" value="P:metaphase chromosome alignment"/>
    <property type="evidence" value="ECO:0000250"/>
    <property type="project" value="UniProtKB"/>
</dbReference>
<dbReference type="GO" id="GO:0007019">
    <property type="term" value="P:microtubule depolymerization"/>
    <property type="evidence" value="ECO:0007669"/>
    <property type="project" value="TreeGrafter"/>
</dbReference>
<dbReference type="GO" id="GO:0007018">
    <property type="term" value="P:microtubule-based movement"/>
    <property type="evidence" value="ECO:0007669"/>
    <property type="project" value="InterPro"/>
</dbReference>
<dbReference type="GO" id="GO:0007080">
    <property type="term" value="P:mitotic metaphase chromosome alignment"/>
    <property type="evidence" value="ECO:0000250"/>
    <property type="project" value="UniProtKB"/>
</dbReference>
<dbReference type="CDD" id="cd01367">
    <property type="entry name" value="KISc_KIF2_like"/>
    <property type="match status" value="1"/>
</dbReference>
<dbReference type="FunFam" id="3.40.850.10:FF:000006">
    <property type="entry name" value="Kinesin-like protein"/>
    <property type="match status" value="1"/>
</dbReference>
<dbReference type="Gene3D" id="3.40.850.10">
    <property type="entry name" value="Kinesin motor domain"/>
    <property type="match status" value="1"/>
</dbReference>
<dbReference type="InterPro" id="IPR027640">
    <property type="entry name" value="Kinesin-like_fam"/>
</dbReference>
<dbReference type="InterPro" id="IPR019821">
    <property type="entry name" value="Kinesin_motor_CS"/>
</dbReference>
<dbReference type="InterPro" id="IPR001752">
    <property type="entry name" value="Kinesin_motor_dom"/>
</dbReference>
<dbReference type="InterPro" id="IPR036961">
    <property type="entry name" value="Kinesin_motor_dom_sf"/>
</dbReference>
<dbReference type="InterPro" id="IPR027417">
    <property type="entry name" value="P-loop_NTPase"/>
</dbReference>
<dbReference type="PANTHER" id="PTHR47971:SF25">
    <property type="entry name" value="KINESIN-LIKE PROTEIN KIF2C"/>
    <property type="match status" value="1"/>
</dbReference>
<dbReference type="PANTHER" id="PTHR47971">
    <property type="entry name" value="KINESIN-RELATED PROTEIN 6"/>
    <property type="match status" value="1"/>
</dbReference>
<dbReference type="Pfam" id="PF00225">
    <property type="entry name" value="Kinesin"/>
    <property type="match status" value="1"/>
</dbReference>
<dbReference type="PRINTS" id="PR00380">
    <property type="entry name" value="KINESINHEAVY"/>
</dbReference>
<dbReference type="SMART" id="SM00129">
    <property type="entry name" value="KISc"/>
    <property type="match status" value="1"/>
</dbReference>
<dbReference type="SUPFAM" id="SSF52540">
    <property type="entry name" value="P-loop containing nucleoside triphosphate hydrolases"/>
    <property type="match status" value="1"/>
</dbReference>
<dbReference type="PROSITE" id="PS00411">
    <property type="entry name" value="KINESIN_MOTOR_1"/>
    <property type="match status" value="1"/>
</dbReference>
<dbReference type="PROSITE" id="PS50067">
    <property type="entry name" value="KINESIN_MOTOR_2"/>
    <property type="match status" value="1"/>
</dbReference>
<proteinExistence type="evidence at transcript level"/>
<sequence>MIDFDDVAAINPELLQLLPLHPKDNLPLQENVTIQKQKRRSVNSKIPAPKESLRTRSTRMSTVSELRVTAQENDMEVELPAAANTRKQFSVPPTHPRPSCPAVAEIPSRMVSEEVEEQVHSIRGSSSANPVNSVRRKSCIVKEVEKMKNKREEKKAQNSEMRMKRAQEYDSSFPNWEFARMIKEFRATLECHPLTMTDPIEEHRICVCVRKRPLNKQELAKKEIDVISIPSKCLLLVHEPKLKVDLTKYLENQAFCFDFAFDETASNEVVYRFTARPLVQTIFEGGKATCFAYGQTGSGKTHTMGGDLSGKAQNASKGIYAMASRDVFLLKNQPCYRKLGLEVYVTFFEIYNGKLFDLLNKKAKLRVLEDGKQQVQVVGLQEHLVNSADDVIKMIDMGSACRTSGQTFANSNSSRSHACFQILLRAKGRMHGKFSLVDLAGNERGADTSSADRQTRMEGAEINKSLLALKECIRALGQNKAHTPFRESKLTQVLRDSFIGENSRTCMIATISPGISSCEYTLNTLRYADRVKELSPHSGPSGEQLIQMETEEMEACSNGALIPGNLSKEEEELSSQMSSFNEAMTQIRELEERAVEELKEIIQQGPDWLELSEMTEQPDYDLETFVNKAEFALAQQAKHFSALRDVIKALRLAMQLEEQASRQISSKKRPQ</sequence>
<protein>
    <recommendedName>
        <fullName>Kinesin-like protein KIF2C</fullName>
    </recommendedName>
    <alternativeName>
        <fullName>Mitotic centromere-associated kinesin</fullName>
        <shortName>MCAK</shortName>
    </alternativeName>
</protein>
<comment type="function">
    <text evidence="3">In complex with KIF18B, constitutes the major microtubule plus-end depolymerizing activity in mitotic cells. Regulates the turnover of microtubules at the kinetochore and functions in chromosome segregation during mitosis. Plays a role in chromosome congression and is required for the lateral to end-on conversion of the chromosome-microtubule attachment.</text>
</comment>
<comment type="subunit">
    <text evidence="3">Interacts with CENPH. Interacts with MTUS2/TIP150; the interaction is direct. Interacts with MAPRE1; the interaction is direct, regulated by phosphorylation and is probably required for targeting to growing microtubule plus ends. Interacts with KIF18B at microtubule tips; this interaction increases the affinity of both partners for microtubule plus ends and is required for robust microtubule depolymerization. Phosphorylation by AURKA or AURKB strongly reduces KIF18B-binding.</text>
</comment>
<comment type="subcellular location">
    <subcellularLocation>
        <location evidence="3">Cytoplasm</location>
        <location evidence="3">Cytoskeleton</location>
    </subcellularLocation>
    <subcellularLocation>
        <location evidence="2">Nucleus</location>
    </subcellularLocation>
    <subcellularLocation>
        <location evidence="3">Chromosome</location>
        <location evidence="3">Centromere</location>
    </subcellularLocation>
    <subcellularLocation>
        <location evidence="3">Chromosome</location>
        <location evidence="3">Centromere</location>
        <location evidence="3">Kinetochore</location>
    </subcellularLocation>
    <text evidence="2 3">Associates with the microtubule network at the growing distal tip (the plus-end) of microtubules, probably through interaction with MTUS2/TIP150 and MAPRE1. Association with microtubule plus ends is also mediated by interaction with KIF18B. Centromeric localization requires the presence of BUB1 and SGO2.</text>
</comment>
<comment type="domain">
    <text evidence="3">The microtubule tip localization signal (MtLS) motif; mediates interaction with MAPRE1 and targeting to the growing microtubule plus ends.</text>
</comment>
<comment type="PTM">
    <text evidence="3">Phosphorylation by AURKB, regulates association with centromeres and kinetochores and the microtubule depolymerization activity.</text>
</comment>
<comment type="PTM">
    <text evidence="3">Ubiquitinated.</text>
</comment>
<comment type="similarity">
    <text evidence="5">Belongs to the TRAFAC class myosin-kinesin ATPase superfamily. Kinesin family. MCAK/KIF2 subfamily.</text>
</comment>
<accession>Q95LP1</accession>
<keyword id="KW-0067">ATP-binding</keyword>
<keyword id="KW-0131">Cell cycle</keyword>
<keyword id="KW-0132">Cell division</keyword>
<keyword id="KW-0137">Centromere</keyword>
<keyword id="KW-0158">Chromosome</keyword>
<keyword id="KW-0159">Chromosome partition</keyword>
<keyword id="KW-0175">Coiled coil</keyword>
<keyword id="KW-0963">Cytoplasm</keyword>
<keyword id="KW-0206">Cytoskeleton</keyword>
<keyword id="KW-1015">Disulfide bond</keyword>
<keyword id="KW-0995">Kinetochore</keyword>
<keyword id="KW-0493">Microtubule</keyword>
<keyword id="KW-0498">Mitosis</keyword>
<keyword id="KW-0547">Nucleotide-binding</keyword>
<keyword id="KW-0539">Nucleus</keyword>
<keyword id="KW-0597">Phosphoprotein</keyword>
<keyword id="KW-1185">Reference proteome</keyword>
<keyword id="KW-0832">Ubl conjugation</keyword>
<gene>
    <name type="primary">KIF2C</name>
    <name type="ORF">QtsA-16015</name>
</gene>
<organism>
    <name type="scientific">Macaca fascicularis</name>
    <name type="common">Crab-eating macaque</name>
    <name type="synonym">Cynomolgus monkey</name>
    <dbReference type="NCBI Taxonomy" id="9541"/>
    <lineage>
        <taxon>Eukaryota</taxon>
        <taxon>Metazoa</taxon>
        <taxon>Chordata</taxon>
        <taxon>Craniata</taxon>
        <taxon>Vertebrata</taxon>
        <taxon>Euteleostomi</taxon>
        <taxon>Mammalia</taxon>
        <taxon>Eutheria</taxon>
        <taxon>Euarchontoglires</taxon>
        <taxon>Primates</taxon>
        <taxon>Haplorrhini</taxon>
        <taxon>Catarrhini</taxon>
        <taxon>Cercopithecidae</taxon>
        <taxon>Cercopithecinae</taxon>
        <taxon>Macaca</taxon>
    </lineage>
</organism>
<name>KIF2C_MACFA</name>